<dbReference type="EC" id="6.1.1.9"/>
<dbReference type="EMBL" id="X05891">
    <property type="protein sequence ID" value="CAA29322.1"/>
    <property type="molecule type" value="Genomic_DNA"/>
</dbReference>
<dbReference type="EMBL" id="J03497">
    <property type="protein sequence ID" value="AAA24657.1"/>
    <property type="molecule type" value="Genomic_DNA"/>
</dbReference>
<dbReference type="EMBL" id="U14003">
    <property type="protein sequence ID" value="AAA97155.1"/>
    <property type="molecule type" value="Genomic_DNA"/>
</dbReference>
<dbReference type="EMBL" id="U00096">
    <property type="protein sequence ID" value="AAC77215.1"/>
    <property type="molecule type" value="Genomic_DNA"/>
</dbReference>
<dbReference type="EMBL" id="AP009048">
    <property type="protein sequence ID" value="BAE78255.1"/>
    <property type="molecule type" value="Genomic_DNA"/>
</dbReference>
<dbReference type="EMBL" id="AY283771">
    <property type="protein sequence ID" value="AAP43521.1"/>
    <property type="molecule type" value="Genomic_DNA"/>
</dbReference>
<dbReference type="PIR" id="E65238">
    <property type="entry name" value="SYECVT"/>
</dbReference>
<dbReference type="RefSeq" id="NP_418679.1">
    <property type="nucleotide sequence ID" value="NC_000913.3"/>
</dbReference>
<dbReference type="RefSeq" id="WP_000416392.1">
    <property type="nucleotide sequence ID" value="NZ_STEB01000013.1"/>
</dbReference>
<dbReference type="SMR" id="P07118"/>
<dbReference type="BioGRID" id="4262724">
    <property type="interactions" value="9"/>
</dbReference>
<dbReference type="BioGRID" id="853071">
    <property type="interactions" value="1"/>
</dbReference>
<dbReference type="DIP" id="DIP-11112N"/>
<dbReference type="FunCoup" id="P07118">
    <property type="interactions" value="810"/>
</dbReference>
<dbReference type="IntAct" id="P07118">
    <property type="interactions" value="6"/>
</dbReference>
<dbReference type="STRING" id="511145.b4258"/>
<dbReference type="jPOST" id="P07118"/>
<dbReference type="PaxDb" id="511145-b4258"/>
<dbReference type="EnsemblBacteria" id="AAC77215">
    <property type="protein sequence ID" value="AAC77215"/>
    <property type="gene ID" value="b4258"/>
</dbReference>
<dbReference type="GeneID" id="948785"/>
<dbReference type="KEGG" id="ecj:JW4215"/>
<dbReference type="KEGG" id="eco:b4258"/>
<dbReference type="KEGG" id="ecoc:C3026_22970"/>
<dbReference type="PATRIC" id="fig|1411691.4.peg.2446"/>
<dbReference type="EchoBASE" id="EB1060"/>
<dbReference type="eggNOG" id="COG0525">
    <property type="taxonomic scope" value="Bacteria"/>
</dbReference>
<dbReference type="HOGENOM" id="CLU_001493_0_2_6"/>
<dbReference type="InParanoid" id="P07118"/>
<dbReference type="OMA" id="LDTWMDS"/>
<dbReference type="OrthoDB" id="9810365at2"/>
<dbReference type="PhylomeDB" id="P07118"/>
<dbReference type="BioCyc" id="EcoCyc:VALS-MONOMER"/>
<dbReference type="BioCyc" id="MetaCyc:VALS-MONOMER"/>
<dbReference type="BRENDA" id="6.1.1.9">
    <property type="organism ID" value="2026"/>
</dbReference>
<dbReference type="SABIO-RK" id="P07118"/>
<dbReference type="PRO" id="PR:P07118"/>
<dbReference type="Proteomes" id="UP000000625">
    <property type="component" value="Chromosome"/>
</dbReference>
<dbReference type="GO" id="GO:0005829">
    <property type="term" value="C:cytosol"/>
    <property type="evidence" value="ECO:0000314"/>
    <property type="project" value="EcoCyc"/>
</dbReference>
<dbReference type="GO" id="GO:0002161">
    <property type="term" value="F:aminoacyl-tRNA deacylase activity"/>
    <property type="evidence" value="ECO:0000314"/>
    <property type="project" value="EcoCyc"/>
</dbReference>
<dbReference type="GO" id="GO:0005524">
    <property type="term" value="F:ATP binding"/>
    <property type="evidence" value="ECO:0007669"/>
    <property type="project" value="UniProtKB-UniRule"/>
</dbReference>
<dbReference type="GO" id="GO:0000287">
    <property type="term" value="F:magnesium ion binding"/>
    <property type="evidence" value="ECO:0000314"/>
    <property type="project" value="EcoCyc"/>
</dbReference>
<dbReference type="GO" id="GO:0004832">
    <property type="term" value="F:valine-tRNA ligase activity"/>
    <property type="evidence" value="ECO:0000314"/>
    <property type="project" value="EcoCyc"/>
</dbReference>
<dbReference type="GO" id="GO:0061475">
    <property type="term" value="P:cytosolic valyl-tRNA aminoacylation"/>
    <property type="evidence" value="ECO:0000315"/>
    <property type="project" value="EcoCyc"/>
</dbReference>
<dbReference type="GO" id="GO:0045903">
    <property type="term" value="P:positive regulation of translational fidelity"/>
    <property type="evidence" value="ECO:0000315"/>
    <property type="project" value="EcoCyc"/>
</dbReference>
<dbReference type="GO" id="GO:0006438">
    <property type="term" value="P:valyl-tRNA aminoacylation"/>
    <property type="evidence" value="ECO:0000315"/>
    <property type="project" value="EcoCyc"/>
</dbReference>
<dbReference type="CDD" id="cd07962">
    <property type="entry name" value="Anticodon_Ia_Val"/>
    <property type="match status" value="1"/>
</dbReference>
<dbReference type="CDD" id="cd00817">
    <property type="entry name" value="ValRS_core"/>
    <property type="match status" value="1"/>
</dbReference>
<dbReference type="FunFam" id="1.10.287.380:FF:000001">
    <property type="entry name" value="Valine--tRNA ligase"/>
    <property type="match status" value="1"/>
</dbReference>
<dbReference type="FunFam" id="1.10.730.10:FF:000007">
    <property type="entry name" value="Valine--tRNA ligase"/>
    <property type="match status" value="1"/>
</dbReference>
<dbReference type="FunFam" id="3.40.50.620:FF:000032">
    <property type="entry name" value="Valine--tRNA ligase"/>
    <property type="match status" value="1"/>
</dbReference>
<dbReference type="FunFam" id="3.40.50.620:FF:000146">
    <property type="entry name" value="Valine--tRNA ligase"/>
    <property type="match status" value="1"/>
</dbReference>
<dbReference type="FunFam" id="3.90.740.10:FF:000021">
    <property type="entry name" value="Valine--tRNA ligase"/>
    <property type="match status" value="1"/>
</dbReference>
<dbReference type="Gene3D" id="3.40.50.620">
    <property type="entry name" value="HUPs"/>
    <property type="match status" value="2"/>
</dbReference>
<dbReference type="Gene3D" id="1.10.730.10">
    <property type="entry name" value="Isoleucyl-tRNA Synthetase, Domain 1"/>
    <property type="match status" value="1"/>
</dbReference>
<dbReference type="Gene3D" id="1.10.287.380">
    <property type="entry name" value="Valyl-tRNA synthetase, C-terminal domain"/>
    <property type="match status" value="1"/>
</dbReference>
<dbReference type="Gene3D" id="3.90.740.10">
    <property type="entry name" value="Valyl/Leucyl/Isoleucyl-tRNA synthetase, editing domain"/>
    <property type="match status" value="2"/>
</dbReference>
<dbReference type="HAMAP" id="MF_02004">
    <property type="entry name" value="Val_tRNA_synth_type1"/>
    <property type="match status" value="1"/>
</dbReference>
<dbReference type="InterPro" id="IPR001412">
    <property type="entry name" value="aa-tRNA-synth_I_CS"/>
</dbReference>
<dbReference type="InterPro" id="IPR002300">
    <property type="entry name" value="aa-tRNA-synth_Ia"/>
</dbReference>
<dbReference type="InterPro" id="IPR033705">
    <property type="entry name" value="Anticodon_Ia_Val"/>
</dbReference>
<dbReference type="InterPro" id="IPR013155">
    <property type="entry name" value="M/V/L/I-tRNA-synth_anticd-bd"/>
</dbReference>
<dbReference type="InterPro" id="IPR014729">
    <property type="entry name" value="Rossmann-like_a/b/a_fold"/>
</dbReference>
<dbReference type="InterPro" id="IPR010978">
    <property type="entry name" value="tRNA-bd_arm"/>
</dbReference>
<dbReference type="InterPro" id="IPR009080">
    <property type="entry name" value="tRNAsynth_Ia_anticodon-bd"/>
</dbReference>
<dbReference type="InterPro" id="IPR037118">
    <property type="entry name" value="Val-tRNA_synth_C_sf"/>
</dbReference>
<dbReference type="InterPro" id="IPR019499">
    <property type="entry name" value="Val-tRNA_synth_tRNA-bd"/>
</dbReference>
<dbReference type="InterPro" id="IPR009008">
    <property type="entry name" value="Val/Leu/Ile-tRNA-synth_edit"/>
</dbReference>
<dbReference type="InterPro" id="IPR002303">
    <property type="entry name" value="Valyl-tRNA_ligase"/>
</dbReference>
<dbReference type="NCBIfam" id="NF004349">
    <property type="entry name" value="PRK05729.1"/>
    <property type="match status" value="1"/>
</dbReference>
<dbReference type="NCBIfam" id="TIGR00422">
    <property type="entry name" value="valS"/>
    <property type="match status" value="1"/>
</dbReference>
<dbReference type="PANTHER" id="PTHR11946:SF93">
    <property type="entry name" value="VALINE--TRNA LIGASE, CHLOROPLASTIC_MITOCHONDRIAL 2"/>
    <property type="match status" value="1"/>
</dbReference>
<dbReference type="PANTHER" id="PTHR11946">
    <property type="entry name" value="VALYL-TRNA SYNTHETASES"/>
    <property type="match status" value="1"/>
</dbReference>
<dbReference type="Pfam" id="PF08264">
    <property type="entry name" value="Anticodon_1"/>
    <property type="match status" value="1"/>
</dbReference>
<dbReference type="Pfam" id="PF00133">
    <property type="entry name" value="tRNA-synt_1"/>
    <property type="match status" value="1"/>
</dbReference>
<dbReference type="Pfam" id="PF10458">
    <property type="entry name" value="Val_tRNA-synt_C"/>
    <property type="match status" value="1"/>
</dbReference>
<dbReference type="PRINTS" id="PR00986">
    <property type="entry name" value="TRNASYNTHVAL"/>
</dbReference>
<dbReference type="SUPFAM" id="SSF47323">
    <property type="entry name" value="Anticodon-binding domain of a subclass of class I aminoacyl-tRNA synthetases"/>
    <property type="match status" value="1"/>
</dbReference>
<dbReference type="SUPFAM" id="SSF52374">
    <property type="entry name" value="Nucleotidylyl transferase"/>
    <property type="match status" value="1"/>
</dbReference>
<dbReference type="SUPFAM" id="SSF46589">
    <property type="entry name" value="tRNA-binding arm"/>
    <property type="match status" value="1"/>
</dbReference>
<dbReference type="SUPFAM" id="SSF50677">
    <property type="entry name" value="ValRS/IleRS/LeuRS editing domain"/>
    <property type="match status" value="1"/>
</dbReference>
<dbReference type="PROSITE" id="PS00178">
    <property type="entry name" value="AA_TRNA_LIGASE_I"/>
    <property type="match status" value="1"/>
</dbReference>
<name>SYV_ECOLI</name>
<sequence length="951" mass="108192">MEKTYNPQDIEQPLYEHWEKQGYFKPNGDESQESFCIMIPPPNVTGSLHMGHAFQQTIMDTMIRYQRMQGKNTLWQVGTDHAGIATQMVVERKIAAEEGKTRHDYGREAFIDKIWEWKAESGGTITRQMRRLGNSVDWERERFTMDEGLSNAVKEVFVRLYKEDLIYRGKRLVNWDPKLRTAISDLEVENRESKGSMWHIRYPLADGAKTADGKDYLVVATTRPETLLGDTGVAVNPEDPRYKDLIGKYVILPLVNRRIPIVGDEHADMEKGTGCVKITPAHDFNDYEVGKRHALPMINILTFDGDIRESAQVFDTKGNESDVYSSEIPAEFQKLERFAARKAVVAAVDALGLLEEIKPHDLTVPYGDRGGVVIEPMLTDQWYVRADVLAKPAVEAVENGDIQFVPKQYENMYFSWMRDIQDWCISRQLWWGHRIPAWYDEAGNVYVGRNEDEVRKENNLGADVVLRQDEDVLDTWFSSALWTFSTLGWPENTDALRQFHPTSVMVSGFDIIFFWIARMIMMTMHFIKDENGKPQVPFHTVYMTGLIRDDEGQKMSKSKGNVIDPLDMVDGISLPELLEKRTGNMMQPQLADKIRKRTEKQFPNGIEPHGTDALRFTLAALASTGRDINWDMKRLEGYRNFCNKLWNASRFVLMNTEGQDCGFNGGEMTLSLADRWILAEFNQTIKAYREALDSFRFDIAAGILYEFTWNQFCDWYLELTKPVMNGGTEAELRGTRHTLVTVLEGLLRLAHPIIPFITETIWQRVKVLCGITADTIMLQPFPQYDASQVDEAALADTEWLKQAIVAVRNIRAEMNIAPGKPLELLLRGCSADAERRVNENRGFLQTLARLESITVLPADDKGPVSVTKIIDGAELLIPMAGLINKEDELARLAKEVAKIEGEISRIENKLANEGFVARAPEAVIAKEREKLEGYAEAKAKLIEQQAVIAAL</sequence>
<protein>
    <recommendedName>
        <fullName>Valine--tRNA ligase</fullName>
        <ecNumber>6.1.1.9</ecNumber>
    </recommendedName>
    <alternativeName>
        <fullName>Valyl-tRNA synthetase</fullName>
        <shortName>ValRS</shortName>
    </alternativeName>
</protein>
<proteinExistence type="evidence at protein level"/>
<reference key="1">
    <citation type="journal article" date="1987" name="Nucleic Acids Res.">
        <title>Nucleotide sequence of Escherichia coli valyl-tRNA synthetase gene valS.</title>
        <authorList>
            <person name="Haertlein M."/>
            <person name="Frank R."/>
            <person name="Madern D."/>
        </authorList>
    </citation>
    <scope>NUCLEOTIDE SEQUENCE [GENOMIC DNA]</scope>
    <source>
        <strain>K12</strain>
    </source>
</reference>
<reference key="2">
    <citation type="journal article" date="1988" name="J. Biol. Chem.">
        <title>Valyl-tRNA synthetase gene of Escherichia coli K12. Primary structure and homology within a family of aminoacyl-tRNA synthetases.</title>
        <authorList>
            <person name="Heck J.D."/>
            <person name="Hatfield G.W."/>
        </authorList>
    </citation>
    <scope>NUCLEOTIDE SEQUENCE [GENOMIC DNA]</scope>
    <source>
        <strain>K12</strain>
    </source>
</reference>
<reference key="3">
    <citation type="journal article" date="1995" name="Nucleic Acids Res.">
        <title>Analysis of the Escherichia coli genome VI: DNA sequence of the region from 92.8 through 100 minutes.</title>
        <authorList>
            <person name="Burland V.D."/>
            <person name="Plunkett G. III"/>
            <person name="Sofia H.J."/>
            <person name="Daniels D.L."/>
            <person name="Blattner F.R."/>
        </authorList>
    </citation>
    <scope>NUCLEOTIDE SEQUENCE [LARGE SCALE GENOMIC DNA]</scope>
    <source>
        <strain>K12 / MG1655 / ATCC 47076</strain>
    </source>
</reference>
<reference key="4">
    <citation type="journal article" date="1997" name="Science">
        <title>The complete genome sequence of Escherichia coli K-12.</title>
        <authorList>
            <person name="Blattner F.R."/>
            <person name="Plunkett G. III"/>
            <person name="Bloch C.A."/>
            <person name="Perna N.T."/>
            <person name="Burland V."/>
            <person name="Riley M."/>
            <person name="Collado-Vides J."/>
            <person name="Glasner J.D."/>
            <person name="Rode C.K."/>
            <person name="Mayhew G.F."/>
            <person name="Gregor J."/>
            <person name="Davis N.W."/>
            <person name="Kirkpatrick H.A."/>
            <person name="Goeden M.A."/>
            <person name="Rose D.J."/>
            <person name="Mau B."/>
            <person name="Shao Y."/>
        </authorList>
    </citation>
    <scope>NUCLEOTIDE SEQUENCE [LARGE SCALE GENOMIC DNA]</scope>
    <source>
        <strain>K12 / MG1655 / ATCC 47076</strain>
    </source>
</reference>
<reference key="5">
    <citation type="journal article" date="2006" name="Mol. Syst. Biol.">
        <title>Highly accurate genome sequences of Escherichia coli K-12 strains MG1655 and W3110.</title>
        <authorList>
            <person name="Hayashi K."/>
            <person name="Morooka N."/>
            <person name="Yamamoto Y."/>
            <person name="Fujita K."/>
            <person name="Isono K."/>
            <person name="Choi S."/>
            <person name="Ohtsubo E."/>
            <person name="Baba T."/>
            <person name="Wanner B.L."/>
            <person name="Mori H."/>
            <person name="Horiuchi T."/>
        </authorList>
    </citation>
    <scope>NUCLEOTIDE SEQUENCE [LARGE SCALE GENOMIC DNA]</scope>
    <source>
        <strain>K12 / W3110 / ATCC 27325 / DSM 5911</strain>
    </source>
</reference>
<reference key="6">
    <citation type="submission" date="2003-04" db="EMBL/GenBank/DDBJ databases">
        <title>Nucleotide sequence of the valS-holC region of Escherichia coli B.</title>
        <authorList>
            <person name="Ramchandani J.H."/>
            <person name="Bhattacharjee S.K."/>
            <person name="Mahajan S.K."/>
        </authorList>
    </citation>
    <scope>NUCLEOTIDE SEQUENCE [GENOMIC DNA] OF 1-801</scope>
    <source>
        <strain>B / MD6014</strain>
    </source>
</reference>
<reference key="7">
    <citation type="journal article" date="1997" name="Electrophoresis">
        <title>Comparing the predicted and observed properties of proteins encoded in the genome of Escherichia coli K-12.</title>
        <authorList>
            <person name="Link A.J."/>
            <person name="Robison K."/>
            <person name="Church G.M."/>
        </authorList>
    </citation>
    <scope>PROTEIN SEQUENCE OF 1-12</scope>
    <source>
        <strain>K12 / EMG2</strain>
    </source>
</reference>
<reference key="8">
    <citation type="journal article" date="1997" name="Electrophoresis">
        <title>Escherichia coli proteome analysis using the gene-protein database.</title>
        <authorList>
            <person name="VanBogelen R.A."/>
            <person name="Abshire K.Z."/>
            <person name="Moldover B."/>
            <person name="Olson E.R."/>
            <person name="Neidhardt F.C."/>
        </authorList>
    </citation>
    <scope>IDENTIFICATION BY 2D-GEL</scope>
</reference>
<reference key="9">
    <citation type="journal article" date="2001" name="Science">
        <title>Enlarging the amino acid set of Escherichia coli by infiltration of the valine coding pathway.</title>
        <authorList>
            <person name="Doering V."/>
            <person name="Mootz H.D."/>
            <person name="Nangle L.A."/>
            <person name="Hendrickson T.L."/>
            <person name="de Crecy-Lagard V."/>
            <person name="Schimmel P."/>
            <person name="Marliere P."/>
        </authorList>
    </citation>
    <scope>MUTAGENESIS OF THR-222</scope>
</reference>
<reference key="10">
    <citation type="journal article" date="2002" name="Biochemistry">
        <title>Crucial role of conserved lysine 277 in the fidelity of tRNA aminoacylation by Escherichia coli valyl-tRNA synthetase.</title>
        <authorList>
            <person name="Hountondji C."/>
            <person name="Lazennec C."/>
            <person name="Beauvallet C."/>
            <person name="Dessen P."/>
            <person name="Pernollet J.-C."/>
            <person name="Plateau P."/>
            <person name="Blanquet S."/>
        </authorList>
    </citation>
    <scope>KINETIC PARAMETERS</scope>
    <scope>MUTAGENESIS OF LYS-277</scope>
</reference>
<keyword id="KW-0030">Aminoacyl-tRNA synthetase</keyword>
<keyword id="KW-0067">ATP-binding</keyword>
<keyword id="KW-0175">Coiled coil</keyword>
<keyword id="KW-0963">Cytoplasm</keyword>
<keyword id="KW-0903">Direct protein sequencing</keyword>
<keyword id="KW-0436">Ligase</keyword>
<keyword id="KW-0547">Nucleotide-binding</keyword>
<keyword id="KW-0648">Protein biosynthesis</keyword>
<keyword id="KW-1185">Reference proteome</keyword>
<comment type="function">
    <text>Catalyzes the attachment of valine to tRNA(Val). As ValRS can inadvertently accommodate and process structurally similar amino acids such as threonine, to avoid such errors, it has a 'posttransfer' editing activity that hydrolyzes mischarged Thr-tRNA(Val) in a tRNA-dependent manner.</text>
</comment>
<comment type="catalytic activity">
    <reaction>
        <text>tRNA(Val) + L-valine + ATP = L-valyl-tRNA(Val) + AMP + diphosphate</text>
        <dbReference type="Rhea" id="RHEA:10704"/>
        <dbReference type="Rhea" id="RHEA-COMP:9672"/>
        <dbReference type="Rhea" id="RHEA-COMP:9708"/>
        <dbReference type="ChEBI" id="CHEBI:30616"/>
        <dbReference type="ChEBI" id="CHEBI:33019"/>
        <dbReference type="ChEBI" id="CHEBI:57762"/>
        <dbReference type="ChEBI" id="CHEBI:78442"/>
        <dbReference type="ChEBI" id="CHEBI:78537"/>
        <dbReference type="ChEBI" id="CHEBI:456215"/>
        <dbReference type="EC" id="6.1.1.9"/>
    </reaction>
</comment>
<comment type="biophysicochemical properties">
    <kinetics>
        <KM evidence="4">0.1 uM for tRNA</KM>
        <KM evidence="4">47 uM for valine</KM>
    </kinetics>
</comment>
<comment type="subunit">
    <text>Monomer.</text>
</comment>
<comment type="subcellular location">
    <subcellularLocation>
        <location>Cytoplasm</location>
    </subcellularLocation>
</comment>
<comment type="domain">
    <text>ValRS has two distinct active sites: one for aminoacylation and one for editing. The misactivated threonine is translocated from the active site to the editing site.</text>
</comment>
<comment type="domain">
    <text evidence="1">The C-terminal coiled-coil domain is crucial for aminoacylation activity.</text>
</comment>
<comment type="similarity">
    <text evidence="5">Belongs to the class-I aminoacyl-tRNA synthetase family. ValS type 1 subfamily.</text>
</comment>
<organism>
    <name type="scientific">Escherichia coli (strain K12)</name>
    <dbReference type="NCBI Taxonomy" id="83333"/>
    <lineage>
        <taxon>Bacteria</taxon>
        <taxon>Pseudomonadati</taxon>
        <taxon>Pseudomonadota</taxon>
        <taxon>Gammaproteobacteria</taxon>
        <taxon>Enterobacterales</taxon>
        <taxon>Enterobacteriaceae</taxon>
        <taxon>Escherichia</taxon>
    </lineage>
</organism>
<evidence type="ECO:0000250" key="1"/>
<evidence type="ECO:0000255" key="2"/>
<evidence type="ECO:0000269" key="3">
    <source>
    </source>
</evidence>
<evidence type="ECO:0000269" key="4">
    <source>
    </source>
</evidence>
<evidence type="ECO:0000305" key="5"/>
<accession>P07118</accession>
<accession>P78142</accession>
<accession>Q2M651</accession>
<accession>Q7X4V7</accession>
<gene>
    <name type="primary">valS</name>
    <name type="ordered locus">b4258</name>
    <name type="ordered locus">JW4215</name>
</gene>
<feature type="chain" id="PRO_0000106224" description="Valine--tRNA ligase">
    <location>
        <begin position="1"/>
        <end position="951"/>
    </location>
</feature>
<feature type="coiled-coil region" evidence="2">
    <location>
        <begin position="880"/>
        <end position="944"/>
    </location>
</feature>
<feature type="short sequence motif" description="'HIGH' region">
    <location>
        <begin position="42"/>
        <end position="52"/>
    </location>
</feature>
<feature type="short sequence motif" description="'KMSKS' region">
    <location>
        <begin position="554"/>
        <end position="558"/>
    </location>
</feature>
<feature type="binding site" evidence="1">
    <location>
        <position position="557"/>
    </location>
    <ligand>
        <name>ATP</name>
        <dbReference type="ChEBI" id="CHEBI:30616"/>
    </ligand>
</feature>
<feature type="mutagenesis site" description="Produces mischarged Thr-tRNA(Val) and Cys-tRNA(Val)." evidence="3">
    <original>T</original>
    <variation>P</variation>
    <location>
        <position position="222"/>
    </location>
</feature>
<feature type="mutagenesis site" description="Reduces posttransfer Thr-tRNA(Val) editing rate significantly and alters amino acid discrimination in the editing site, resulting in hydrolysis of the correctly charged cognate product." evidence="4">
    <original>K</original>
    <variation>A</variation>
    <location>
        <position position="277"/>
    </location>
</feature>
<feature type="sequence conflict" description="In Ref. 2; AAA24657." evidence="5" ref="2">
    <original>R</original>
    <variation>A</variation>
    <location>
        <position position="107"/>
    </location>
</feature>
<feature type="sequence conflict" description="In Ref. 6; AAP43521." evidence="5" ref="6">
    <original>G</original>
    <variation>D</variation>
    <location>
        <position position="148"/>
    </location>
</feature>
<feature type="sequence conflict" description="In Ref. 6; AAP43521." evidence="5" ref="6">
    <original>D</original>
    <variation>E</variation>
    <location>
        <position position="452"/>
    </location>
</feature>
<feature type="sequence conflict" description="In Ref. 6; AAP43521." evidence="5" ref="6">
    <original>V</original>
    <variation>A</variation>
    <location>
        <position position="465"/>
    </location>
</feature>
<feature type="sequence conflict" description="In Ref. 1; CAA29322." evidence="5" ref="1">
    <original>S</original>
    <variation>T</variation>
    <location>
        <position position="694"/>
    </location>
</feature>
<feature type="sequence conflict" description="In Ref. 2; AAA24657." evidence="5" ref="2">
    <original>A</original>
    <variation>R</variation>
    <location>
        <position position="833"/>
    </location>
</feature>